<comment type="function">
    <text evidence="1">Nucleoside triphosphate pyrophosphatase that hydrolyzes dTTP and UTP. May have a dual role in cell division arrest and in preventing the incorporation of modified nucleotides into cellular nucleic acids.</text>
</comment>
<comment type="catalytic activity">
    <reaction evidence="1">
        <text>dTTP + H2O = dTMP + diphosphate + H(+)</text>
        <dbReference type="Rhea" id="RHEA:28534"/>
        <dbReference type="ChEBI" id="CHEBI:15377"/>
        <dbReference type="ChEBI" id="CHEBI:15378"/>
        <dbReference type="ChEBI" id="CHEBI:33019"/>
        <dbReference type="ChEBI" id="CHEBI:37568"/>
        <dbReference type="ChEBI" id="CHEBI:63528"/>
        <dbReference type="EC" id="3.6.1.9"/>
    </reaction>
</comment>
<comment type="catalytic activity">
    <reaction evidence="1">
        <text>UTP + H2O = UMP + diphosphate + H(+)</text>
        <dbReference type="Rhea" id="RHEA:29395"/>
        <dbReference type="ChEBI" id="CHEBI:15377"/>
        <dbReference type="ChEBI" id="CHEBI:15378"/>
        <dbReference type="ChEBI" id="CHEBI:33019"/>
        <dbReference type="ChEBI" id="CHEBI:46398"/>
        <dbReference type="ChEBI" id="CHEBI:57865"/>
        <dbReference type="EC" id="3.6.1.9"/>
    </reaction>
</comment>
<comment type="cofactor">
    <cofactor evidence="1">
        <name>a divalent metal cation</name>
        <dbReference type="ChEBI" id="CHEBI:60240"/>
    </cofactor>
</comment>
<comment type="subcellular location">
    <subcellularLocation>
        <location evidence="1">Cytoplasm</location>
    </subcellularLocation>
</comment>
<comment type="similarity">
    <text evidence="1">Belongs to the Maf family. YhdE subfamily.</text>
</comment>
<organism>
    <name type="scientific">Wolbachia sp. subsp. Drosophila simulans (strain wRi)</name>
    <dbReference type="NCBI Taxonomy" id="66084"/>
    <lineage>
        <taxon>Bacteria</taxon>
        <taxon>Pseudomonadati</taxon>
        <taxon>Pseudomonadota</taxon>
        <taxon>Alphaproteobacteria</taxon>
        <taxon>Rickettsiales</taxon>
        <taxon>Anaplasmataceae</taxon>
        <taxon>Wolbachieae</taxon>
        <taxon>Wolbachia</taxon>
    </lineage>
</organism>
<proteinExistence type="inferred from homology"/>
<name>NTPPA_WOLWR</name>
<reference key="1">
    <citation type="journal article" date="2009" name="Proc. Natl. Acad. Sci. U.S.A.">
        <title>The mosaic genome structure of the Wolbachia wRi strain infecting Drosophila simulans.</title>
        <authorList>
            <person name="Klasson L."/>
            <person name="Westberg J."/>
            <person name="Sapountzis P."/>
            <person name="Naeslund K."/>
            <person name="Lutnaes Y."/>
            <person name="Darby A.C."/>
            <person name="Veneti Z."/>
            <person name="Chen L."/>
            <person name="Braig H.R."/>
            <person name="Garrett R."/>
            <person name="Bourtzis K."/>
            <person name="Andersson S.G."/>
        </authorList>
    </citation>
    <scope>NUCLEOTIDE SEQUENCE [LARGE SCALE GENOMIC DNA]</scope>
    <source>
        <strain>wRi</strain>
    </source>
</reference>
<sequence length="198" mass="22480">MTERSLNNLILASSSKRRIALLKQINIEPGLILPADIDEAPLKKELPKDYSIRMAKSKAEKIQSSNPNYFVLGVDTVVACGRRILLKAENVEQAEKCIRLLSGRRHRVYTSVCLLTPDQSKQHIRTVVTIVKFKRLSEQEIKYYLASEEWKNRAGGCNIQGLAGVFVLFLRGSYSSVIGLPLHETYCLLSNYFNFNLY</sequence>
<dbReference type="EC" id="3.6.1.9" evidence="1"/>
<dbReference type="EMBL" id="CP001391">
    <property type="protein sequence ID" value="ACN95240.1"/>
    <property type="molecule type" value="Genomic_DNA"/>
</dbReference>
<dbReference type="RefSeq" id="WP_007550161.1">
    <property type="nucleotide sequence ID" value="NZ_MKIF01000191.1"/>
</dbReference>
<dbReference type="SMR" id="C0R2U8"/>
<dbReference type="STRING" id="66084.WRi_004530"/>
<dbReference type="KEGG" id="wri:WRi_004530"/>
<dbReference type="HOGENOM" id="CLU_040416_2_0_5"/>
<dbReference type="Proteomes" id="UP000001293">
    <property type="component" value="Chromosome"/>
</dbReference>
<dbReference type="GO" id="GO:0005737">
    <property type="term" value="C:cytoplasm"/>
    <property type="evidence" value="ECO:0007669"/>
    <property type="project" value="UniProtKB-SubCell"/>
</dbReference>
<dbReference type="GO" id="GO:0036218">
    <property type="term" value="F:dTTP diphosphatase activity"/>
    <property type="evidence" value="ECO:0007669"/>
    <property type="project" value="RHEA"/>
</dbReference>
<dbReference type="GO" id="GO:0036221">
    <property type="term" value="F:UTP diphosphatase activity"/>
    <property type="evidence" value="ECO:0007669"/>
    <property type="project" value="RHEA"/>
</dbReference>
<dbReference type="GO" id="GO:0009117">
    <property type="term" value="P:nucleotide metabolic process"/>
    <property type="evidence" value="ECO:0007669"/>
    <property type="project" value="UniProtKB-KW"/>
</dbReference>
<dbReference type="CDD" id="cd00555">
    <property type="entry name" value="Maf"/>
    <property type="match status" value="1"/>
</dbReference>
<dbReference type="Gene3D" id="3.90.950.10">
    <property type="match status" value="1"/>
</dbReference>
<dbReference type="HAMAP" id="MF_00528">
    <property type="entry name" value="Maf"/>
    <property type="match status" value="1"/>
</dbReference>
<dbReference type="InterPro" id="IPR029001">
    <property type="entry name" value="ITPase-like_fam"/>
</dbReference>
<dbReference type="InterPro" id="IPR003697">
    <property type="entry name" value="Maf-like"/>
</dbReference>
<dbReference type="NCBIfam" id="TIGR00172">
    <property type="entry name" value="maf"/>
    <property type="match status" value="1"/>
</dbReference>
<dbReference type="NCBIfam" id="NF010946">
    <property type="entry name" value="PRK14366.1"/>
    <property type="match status" value="1"/>
</dbReference>
<dbReference type="PANTHER" id="PTHR43213">
    <property type="entry name" value="BIFUNCTIONAL DTTP/UTP PYROPHOSPHATASE/METHYLTRANSFERASE PROTEIN-RELATED"/>
    <property type="match status" value="1"/>
</dbReference>
<dbReference type="PANTHER" id="PTHR43213:SF5">
    <property type="entry name" value="BIFUNCTIONAL DTTP_UTP PYROPHOSPHATASE_METHYLTRANSFERASE PROTEIN-RELATED"/>
    <property type="match status" value="1"/>
</dbReference>
<dbReference type="Pfam" id="PF02545">
    <property type="entry name" value="Maf"/>
    <property type="match status" value="1"/>
</dbReference>
<dbReference type="PIRSF" id="PIRSF006305">
    <property type="entry name" value="Maf"/>
    <property type="match status" value="1"/>
</dbReference>
<dbReference type="SUPFAM" id="SSF52972">
    <property type="entry name" value="ITPase-like"/>
    <property type="match status" value="1"/>
</dbReference>
<feature type="chain" id="PRO_1000146300" description="dTTP/UTP pyrophosphatase">
    <location>
        <begin position="1"/>
        <end position="198"/>
    </location>
</feature>
<feature type="active site" description="Proton acceptor" evidence="1">
    <location>
        <position position="75"/>
    </location>
</feature>
<feature type="site" description="Important for substrate specificity" evidence="1">
    <location>
        <position position="17"/>
    </location>
</feature>
<feature type="site" description="Important for substrate specificity" evidence="1">
    <location>
        <position position="76"/>
    </location>
</feature>
<feature type="site" description="Important for substrate specificity" evidence="1">
    <location>
        <position position="160"/>
    </location>
</feature>
<accession>C0R2U8</accession>
<evidence type="ECO:0000255" key="1">
    <source>
        <dbReference type="HAMAP-Rule" id="MF_00528"/>
    </source>
</evidence>
<protein>
    <recommendedName>
        <fullName evidence="1">dTTP/UTP pyrophosphatase</fullName>
        <shortName evidence="1">dTTPase/UTPase</shortName>
        <ecNumber evidence="1">3.6.1.9</ecNumber>
    </recommendedName>
    <alternativeName>
        <fullName evidence="1">Nucleoside triphosphate pyrophosphatase</fullName>
    </alternativeName>
    <alternativeName>
        <fullName evidence="1">Nucleotide pyrophosphatase</fullName>
        <shortName evidence="1">Nucleotide PPase</shortName>
    </alternativeName>
</protein>
<keyword id="KW-0963">Cytoplasm</keyword>
<keyword id="KW-0378">Hydrolase</keyword>
<keyword id="KW-0546">Nucleotide metabolism</keyword>
<gene>
    <name type="ordered locus">WRi_004530</name>
</gene>